<feature type="chain" id="PRO_0000328933" description="Transient receptor potential cation channel subfamily M member 5">
    <location>
        <begin position="1"/>
        <end position="1165"/>
    </location>
</feature>
<feature type="topological domain" description="Cytoplasmic" evidence="13">
    <location>
        <begin position="1"/>
        <end position="730"/>
    </location>
</feature>
<feature type="transmembrane region" description="Helical; Name=1" evidence="2">
    <location>
        <begin position="731"/>
        <end position="755"/>
    </location>
</feature>
<feature type="topological domain" description="Extracellular" evidence="13">
    <location>
        <begin position="756"/>
        <end position="765"/>
    </location>
</feature>
<feature type="transmembrane region" description="Helical; Name=2" evidence="2">
    <location>
        <begin position="766"/>
        <end position="785"/>
    </location>
</feature>
<feature type="topological domain" description="Cytoplasmic" evidence="13">
    <location>
        <begin position="786"/>
        <end position="806"/>
    </location>
</feature>
<feature type="transmembrane region" description="Helical; Name=3" evidence="2">
    <location>
        <begin position="807"/>
        <end position="825"/>
    </location>
</feature>
<feature type="topological domain" description="Extracellular" evidence="13">
    <location>
        <begin position="826"/>
        <end position="832"/>
    </location>
</feature>
<feature type="transmembrane region" description="Helical; Name=4" evidence="2">
    <location>
        <begin position="833"/>
        <end position="855"/>
    </location>
</feature>
<feature type="topological domain" description="Cytoplasmic" evidence="13">
    <location>
        <begin position="856"/>
        <end position="864"/>
    </location>
</feature>
<feature type="transmembrane region" description="Helical; Name=5" evidence="2">
    <location>
        <begin position="865"/>
        <end position="894"/>
    </location>
</feature>
<feature type="topological domain" description="Extracellular" evidence="13">
    <location>
        <begin position="895"/>
        <end position="903"/>
    </location>
</feature>
<feature type="intramembrane region" description="Pore-forming" evidence="2">
    <location>
        <begin position="904"/>
        <end position="939"/>
    </location>
</feature>
<feature type="topological domain" description="Extracellular" evidence="13">
    <location>
        <begin position="940"/>
        <end position="951"/>
    </location>
</feature>
<feature type="transmembrane region" description="Helical; Name=6" evidence="2">
    <location>
        <begin position="952"/>
        <end position="986"/>
    </location>
</feature>
<feature type="topological domain" description="Cytoplasmic" evidence="13">
    <location>
        <begin position="987"/>
        <end position="1165"/>
    </location>
</feature>
<feature type="region of interest" description="Disordered" evidence="4">
    <location>
        <begin position="481"/>
        <end position="505"/>
    </location>
</feature>
<feature type="region of interest" description="Disordered" evidence="4">
    <location>
        <begin position="1126"/>
        <end position="1165"/>
    </location>
</feature>
<feature type="coiled-coil region" evidence="3">
    <location>
        <begin position="553"/>
        <end position="581"/>
    </location>
</feature>
<feature type="short sequence motif" description="Selectivity filter" evidence="2">
    <location>
        <begin position="918"/>
        <end position="920"/>
    </location>
</feature>
<feature type="compositionally biased region" description="Basic and acidic residues" evidence="4">
    <location>
        <begin position="486"/>
        <end position="497"/>
    </location>
</feature>
<feature type="binding site" evidence="2">
    <location>
        <position position="222"/>
    </location>
    <ligand>
        <name>Ca(2+)</name>
        <dbReference type="ChEBI" id="CHEBI:29108"/>
        <label>1</label>
    </ligand>
</feature>
<feature type="binding site" evidence="2">
    <location>
        <position position="338"/>
    </location>
    <ligand>
        <name>Ca(2+)</name>
        <dbReference type="ChEBI" id="CHEBI:29108"/>
        <label>1</label>
    </ligand>
</feature>
<feature type="binding site" evidence="2">
    <location>
        <position position="347"/>
    </location>
    <ligand>
        <name>Ca(2+)</name>
        <dbReference type="ChEBI" id="CHEBI:29108"/>
        <label>1</label>
    </ligand>
</feature>
<feature type="binding site" evidence="2">
    <location>
        <position position="350"/>
    </location>
    <ligand>
        <name>Ca(2+)</name>
        <dbReference type="ChEBI" id="CHEBI:29108"/>
        <label>1</label>
    </ligand>
</feature>
<feature type="binding site" evidence="2">
    <location>
        <position position="351"/>
    </location>
    <ligand>
        <name>Ca(2+)</name>
        <dbReference type="ChEBI" id="CHEBI:29108"/>
        <label>1</label>
    </ligand>
</feature>
<feature type="binding site" evidence="2">
    <location>
        <position position="782"/>
    </location>
    <ligand>
        <name>Ca(2+)</name>
        <dbReference type="ChEBI" id="CHEBI:29108"/>
        <label>2</label>
    </ligand>
</feature>
<feature type="binding site" evidence="2">
    <location>
        <position position="785"/>
    </location>
    <ligand>
        <name>Ca(2+)</name>
        <dbReference type="ChEBI" id="CHEBI:29108"/>
        <label>2</label>
    </ligand>
</feature>
<feature type="binding site" evidence="2">
    <location>
        <position position="808"/>
    </location>
    <ligand>
        <name>Ca(2+)</name>
        <dbReference type="ChEBI" id="CHEBI:29108"/>
        <label>2</label>
    </ligand>
</feature>
<feature type="binding site" evidence="2">
    <location>
        <position position="811"/>
    </location>
    <ligand>
        <name>Ca(2+)</name>
        <dbReference type="ChEBI" id="CHEBI:29108"/>
        <label>2</label>
    </ligand>
</feature>
<feature type="binding site" evidence="2">
    <location>
        <position position="1003"/>
    </location>
    <ligand>
        <name>Ca(2+)</name>
        <dbReference type="ChEBI" id="CHEBI:29108"/>
        <label>2</label>
    </ligand>
</feature>
<feature type="modified residue" description="Phosphoserine" evidence="1">
    <location>
        <position position="129"/>
    </location>
</feature>
<feature type="splice variant" id="VSP_052741" description="In isoform 2." evidence="12">
    <original>Q</original>
    <variation>QVH</variation>
    <location>
        <position position="155"/>
    </location>
</feature>
<feature type="splice variant" id="VSP_052742" description="In isoform 3." evidence="11">
    <original>MKD</original>
    <variation>KPV</variation>
    <location>
        <begin position="870"/>
        <end position="872"/>
    </location>
</feature>
<feature type="splice variant" id="VSP_052743" description="In isoform 3." evidence="11">
    <location>
        <begin position="873"/>
        <end position="1165"/>
    </location>
</feature>
<feature type="sequence variant" id="VAR_052377" description="In dbSNP:rs886277.">
    <original>N</original>
    <variation>S</variation>
    <location>
        <position position="235"/>
    </location>
</feature>
<feature type="sequence variant" id="VAR_042578" description="In dbSNP:rs3986599." evidence="7">
    <original>V</original>
    <variation>A</variation>
    <location>
        <position position="254"/>
    </location>
</feature>
<feature type="sequence variant" id="VAR_052378" description="In dbSNP:rs34350821.">
    <original>V</original>
    <variation>L</variation>
    <location>
        <position position="335"/>
    </location>
</feature>
<feature type="sequence variant" id="VAR_052379" description="In dbSNP:rs34551253.">
    <original>A</original>
    <variation>T</variation>
    <location>
        <position position="456"/>
    </location>
</feature>
<feature type="sequence variant" id="VAR_059836" description="In dbSNP:rs4929982.">
    <original>R</original>
    <variation>Q</variation>
    <location>
        <position position="578"/>
    </location>
</feature>
<feature type="mutagenesis site" description="Alters the voltage sensitivity. Renders TRPM5 voltage-sensitive at high Ca(2+) concentration." evidence="9">
    <original>E</original>
    <variation>A</variation>
    <location>
        <position position="351"/>
    </location>
</feature>
<comment type="function">
    <text evidence="1 6">Monovalent cation-selective ion channel activated by intracellular Ca(2+) in a voltage- and temperature-dependent manner (PubMed:14634208). Mediates the transport of Na(+), K(+) and Cs(+) ions equally well (PubMed:14634208). Activated directly by increase in intracellular Ca(2+), but is impermeable to it (PubMed:14634208). The activation mechanism of TRPM5 involves a multistep process. TRPM5 activation involves ligand binding (i.e., tastant molecule, glucose stimulation) to Gq/G-protein coupled receptors (GPCR) and leads to the breakdown of phosphatidylinositol bisphosphate (PIP2) into diacylglycerol (DAG) and inositol trisphosphate (IP3), IP3 binds to its receptors in the endoplasmic reticulum and cause calcium release. Simultaneously with the intracellular Ca(2+) release, DAG activates the protein kinase C (PKC), which phosphorylates the TRPM5 channel. This phosphorylation combined with the bound Ca(2+), leads to a robust inward current allowing the entry of sodium ions (Na+) into the cell. This ion influx depolarizes the cell membrane, generating action potentials that propagate TRPM5 signals. Is a key player in sensing sweet, umami and bitter stimuli (By similarity). Involved in insulin secretion by pancreatic beta cells (By similarity).</text>
</comment>
<comment type="catalytic activity">
    <reaction evidence="6">
        <text>Na(+)(in) = Na(+)(out)</text>
        <dbReference type="Rhea" id="RHEA:34963"/>
        <dbReference type="ChEBI" id="CHEBI:29101"/>
    </reaction>
</comment>
<comment type="catalytic activity">
    <reaction evidence="6">
        <text>K(+)(in) = K(+)(out)</text>
        <dbReference type="Rhea" id="RHEA:29463"/>
        <dbReference type="ChEBI" id="CHEBI:29103"/>
    </reaction>
</comment>
<comment type="activity regulation">
    <text evidence="1 6">Ca(2+)-activated cation channel (PubMed:14634208). Regulated by PI(4,5)P2 levels. PI(4,5)P 2 reverses the Ca(2+) -induced desensitization of channels (PubMed:14634208). TRPM5 is temperature-sensitive and activated by heat. Heat activation is due to a shift of the voltage-dependent activation curve to negative potentials. The channel is blocked by extracellular acidification (By similarity).</text>
</comment>
<comment type="subunit">
    <text evidence="2">Homotetramer.</text>
</comment>
<comment type="interaction">
    <interactant intactId="EBI-18161658">
        <id>Q9NZQ8</id>
    </interactant>
    <interactant intactId="EBI-744820">
        <id>Q9UM19</id>
        <label>HPCAL4</label>
    </interactant>
    <organismsDiffer>false</organismsDiffer>
    <experiments>3</experiments>
</comment>
<comment type="subcellular location">
    <subcellularLocation>
        <location evidence="3">Cell membrane</location>
        <topology evidence="2">Multi-pass membrane protein</topology>
    </subcellularLocation>
</comment>
<comment type="alternative products">
    <event type="alternative splicing"/>
    <isoform>
        <id>Q9NZQ8-1</id>
        <name evidence="5 7 8">1</name>
        <sequence type="displayed"/>
    </isoform>
    <isoform>
        <id>Q9NZQ8-2</id>
        <name evidence="10">2</name>
        <sequence type="described" ref="VSP_052741"/>
    </isoform>
    <isoform>
        <id>Q9NZQ8-3</id>
        <name evidence="5">3</name>
        <sequence type="described" ref="VSP_052742 VSP_052743"/>
    </isoform>
</comment>
<comment type="tissue specificity">
    <text evidence="5">Strongly expressed in fetal brain, liver and kidney, and in adult prostate, testis, ovary, colon and peripheral blood leukocytes. Also expressed in a large proportion of Wilms' tumors and rhabdomyosarcomas. In monochromosomal cell lines shows exclusive paternal expression.</text>
</comment>
<comment type="domain">
    <text evidence="2">Contains two Ca(2+)-binding sites that are allosterically coupled. The binding site in the intracellular domain modulates the voltage dependence and the accessibility of Ca(2+) in the transmembrane domain.</text>
</comment>
<comment type="PTM">
    <text evidence="1">Ser-129 phosphorylation by PKC, is essential for activating TRPM5 via the G(q) pathway.</text>
</comment>
<comment type="similarity">
    <text evidence="13">Belongs to the transient receptor (TC 1.A.4) family. LTrpC subfamily. TRPM5 sub-subfamily.</text>
</comment>
<dbReference type="EMBL" id="AF177473">
    <property type="protein sequence ID" value="AAF26288.1"/>
    <property type="molecule type" value="mRNA"/>
</dbReference>
<dbReference type="EMBL" id="AC124057">
    <property type="status" value="NOT_ANNOTATED_CDS"/>
    <property type="molecule type" value="Genomic_DNA"/>
</dbReference>
<dbReference type="EMBL" id="BC093787">
    <property type="protein sequence ID" value="AAH93787.1"/>
    <property type="molecule type" value="mRNA"/>
</dbReference>
<dbReference type="EMBL" id="BC093789">
    <property type="protein sequence ID" value="AAH93789.1"/>
    <property type="molecule type" value="mRNA"/>
</dbReference>
<dbReference type="EMBL" id="AJ270996">
    <property type="protein sequence ID" value="CAB66342.1"/>
    <property type="molecule type" value="mRNA"/>
</dbReference>
<dbReference type="CCDS" id="CCDS31340.1">
    <molecule id="Q9NZQ8-1"/>
</dbReference>
<dbReference type="RefSeq" id="NP_055370.1">
    <molecule id="Q9NZQ8-1"/>
    <property type="nucleotide sequence ID" value="NM_014555.4"/>
</dbReference>
<dbReference type="SMR" id="Q9NZQ8"/>
<dbReference type="BioGRID" id="118932">
    <property type="interactions" value="2"/>
</dbReference>
<dbReference type="FunCoup" id="Q9NZQ8">
    <property type="interactions" value="284"/>
</dbReference>
<dbReference type="IntAct" id="Q9NZQ8">
    <property type="interactions" value="2"/>
</dbReference>
<dbReference type="STRING" id="9606.ENSP00000155858"/>
<dbReference type="BindingDB" id="Q9NZQ8"/>
<dbReference type="ChEMBL" id="CHEMBL1628468"/>
<dbReference type="DrugCentral" id="Q9NZQ8"/>
<dbReference type="GuidetoPHARMACOLOGY" id="497"/>
<dbReference type="TCDB" id="1.A.4.5.3">
    <property type="family name" value="the transient receptor potential ca2+/cation channel (trp-cc) family"/>
</dbReference>
<dbReference type="iPTMnet" id="Q9NZQ8"/>
<dbReference type="PhosphoSitePlus" id="Q9NZQ8"/>
<dbReference type="BioMuta" id="TRPM5"/>
<dbReference type="DMDM" id="74753086"/>
<dbReference type="MassIVE" id="Q9NZQ8"/>
<dbReference type="PaxDb" id="9606-ENSP00000155858"/>
<dbReference type="PeptideAtlas" id="Q9NZQ8"/>
<dbReference type="ProteomicsDB" id="83486">
    <molecule id="Q9NZQ8-1"/>
</dbReference>
<dbReference type="ProteomicsDB" id="83487">
    <molecule id="Q9NZQ8-2"/>
</dbReference>
<dbReference type="ProteomicsDB" id="83488">
    <molecule id="Q9NZQ8-3"/>
</dbReference>
<dbReference type="TopDownProteomics" id="Q9NZQ8-3">
    <molecule id="Q9NZQ8-3"/>
</dbReference>
<dbReference type="Antibodypedia" id="23152">
    <property type="antibodies" value="164 antibodies from 30 providers"/>
</dbReference>
<dbReference type="DNASU" id="29850"/>
<dbReference type="Ensembl" id="ENST00000696290.1">
    <molecule id="Q9NZQ8-1"/>
    <property type="protein sequence ID" value="ENSP00000512529.1"/>
    <property type="gene ID" value="ENSG00000070985.14"/>
</dbReference>
<dbReference type="GeneID" id="29850"/>
<dbReference type="KEGG" id="hsa:29850"/>
<dbReference type="MANE-Select" id="ENST00000696290.1">
    <property type="protein sequence ID" value="ENSP00000512529.1"/>
    <property type="RefSeq nucleotide sequence ID" value="NM_014555.4"/>
    <property type="RefSeq protein sequence ID" value="NP_055370.1"/>
</dbReference>
<dbReference type="UCSC" id="uc001lwm.5">
    <molecule id="Q9NZQ8-1"/>
    <property type="organism name" value="human"/>
</dbReference>
<dbReference type="AGR" id="HGNC:14323"/>
<dbReference type="CTD" id="29850"/>
<dbReference type="DisGeNET" id="29850"/>
<dbReference type="GeneCards" id="TRPM5"/>
<dbReference type="HGNC" id="HGNC:14323">
    <property type="gene designation" value="TRPM5"/>
</dbReference>
<dbReference type="HPA" id="ENSG00000070985">
    <property type="expression patterns" value="Tissue enhanced (epididymis, intestine, pancreas)"/>
</dbReference>
<dbReference type="MIM" id="604600">
    <property type="type" value="gene"/>
</dbReference>
<dbReference type="neXtProt" id="NX_Q9NZQ8"/>
<dbReference type="OpenTargets" id="ENSG00000070985"/>
<dbReference type="PharmGKB" id="PA37869"/>
<dbReference type="VEuPathDB" id="HostDB:ENSG00000070985"/>
<dbReference type="eggNOG" id="KOG3614">
    <property type="taxonomic scope" value="Eukaryota"/>
</dbReference>
<dbReference type="GeneTree" id="ENSGT00940000160588"/>
<dbReference type="InParanoid" id="Q9NZQ8"/>
<dbReference type="OMA" id="CYCTAVI"/>
<dbReference type="OrthoDB" id="310870at2759"/>
<dbReference type="PAN-GO" id="Q9NZQ8">
    <property type="GO annotations" value="4 GO annotations based on evolutionary models"/>
</dbReference>
<dbReference type="PhylomeDB" id="Q9NZQ8"/>
<dbReference type="TreeFam" id="TF314204"/>
<dbReference type="PathwayCommons" id="Q9NZQ8"/>
<dbReference type="Reactome" id="R-HSA-3295583">
    <property type="pathway name" value="TRP channels"/>
</dbReference>
<dbReference type="Reactome" id="R-HSA-9717207">
    <property type="pathway name" value="Sensory perception of sweet, bitter, and umami (glutamate) taste"/>
</dbReference>
<dbReference type="SignaLink" id="Q9NZQ8"/>
<dbReference type="BioGRID-ORCS" id="29850">
    <property type="hits" value="13 hits in 1147 CRISPR screens"/>
</dbReference>
<dbReference type="GeneWiki" id="TRPM5"/>
<dbReference type="GenomeRNAi" id="29850"/>
<dbReference type="Pharos" id="Q9NZQ8">
    <property type="development level" value="Tchem"/>
</dbReference>
<dbReference type="PRO" id="PR:Q9NZQ8"/>
<dbReference type="Proteomes" id="UP000005640">
    <property type="component" value="Chromosome 11"/>
</dbReference>
<dbReference type="RNAct" id="Q9NZQ8">
    <property type="molecule type" value="protein"/>
</dbReference>
<dbReference type="Bgee" id="ENSG00000070985">
    <property type="expression patterns" value="Expressed in mucosa of transverse colon and 35 other cell types or tissues"/>
</dbReference>
<dbReference type="ExpressionAtlas" id="Q9NZQ8">
    <property type="expression patterns" value="baseline and differential"/>
</dbReference>
<dbReference type="GO" id="GO:0030425">
    <property type="term" value="C:dendrite"/>
    <property type="evidence" value="ECO:0007669"/>
    <property type="project" value="Ensembl"/>
</dbReference>
<dbReference type="GO" id="GO:0016020">
    <property type="term" value="C:membrane"/>
    <property type="evidence" value="ECO:0000304"/>
    <property type="project" value="ProtInc"/>
</dbReference>
<dbReference type="GO" id="GO:0034702">
    <property type="term" value="C:monoatomic ion channel complex"/>
    <property type="evidence" value="ECO:0007669"/>
    <property type="project" value="UniProtKB-KW"/>
</dbReference>
<dbReference type="GO" id="GO:0043025">
    <property type="term" value="C:neuronal cell body"/>
    <property type="evidence" value="ECO:0007669"/>
    <property type="project" value="Ensembl"/>
</dbReference>
<dbReference type="GO" id="GO:0005886">
    <property type="term" value="C:plasma membrane"/>
    <property type="evidence" value="ECO:0000318"/>
    <property type="project" value="GO_Central"/>
</dbReference>
<dbReference type="GO" id="GO:0005509">
    <property type="term" value="F:calcium ion binding"/>
    <property type="evidence" value="ECO:0000250"/>
    <property type="project" value="UniProtKB"/>
</dbReference>
<dbReference type="GO" id="GO:0005227">
    <property type="term" value="F:calcium-activated cation channel activity"/>
    <property type="evidence" value="ECO:0000314"/>
    <property type="project" value="UniProtKB"/>
</dbReference>
<dbReference type="GO" id="GO:0042802">
    <property type="term" value="F:identical protein binding"/>
    <property type="evidence" value="ECO:0000250"/>
    <property type="project" value="UniProtKB"/>
</dbReference>
<dbReference type="GO" id="GO:0005216">
    <property type="term" value="F:monoatomic ion channel activity"/>
    <property type="evidence" value="ECO:0000314"/>
    <property type="project" value="UniProtKB"/>
</dbReference>
<dbReference type="GO" id="GO:0005267">
    <property type="term" value="F:potassium channel activity"/>
    <property type="evidence" value="ECO:0007669"/>
    <property type="project" value="Ensembl"/>
</dbReference>
<dbReference type="GO" id="GO:0005272">
    <property type="term" value="F:sodium channel activity"/>
    <property type="evidence" value="ECO:0000314"/>
    <property type="project" value="UniProtKB"/>
</dbReference>
<dbReference type="GO" id="GO:0070588">
    <property type="term" value="P:calcium ion transmembrane transport"/>
    <property type="evidence" value="ECO:0000304"/>
    <property type="project" value="Reactome"/>
</dbReference>
<dbReference type="GO" id="GO:0030001">
    <property type="term" value="P:metal ion transport"/>
    <property type="evidence" value="ECO:0000318"/>
    <property type="project" value="GO_Central"/>
</dbReference>
<dbReference type="GO" id="GO:0098655">
    <property type="term" value="P:monoatomic cation transmembrane transport"/>
    <property type="evidence" value="ECO:0000318"/>
    <property type="project" value="GO_Central"/>
</dbReference>
<dbReference type="GO" id="GO:0035774">
    <property type="term" value="P:positive regulation of insulin secretion involved in cellular response to glucose stimulus"/>
    <property type="evidence" value="ECO:0007669"/>
    <property type="project" value="Ensembl"/>
</dbReference>
<dbReference type="InterPro" id="IPR005821">
    <property type="entry name" value="Ion_trans_dom"/>
</dbReference>
<dbReference type="InterPro" id="IPR050927">
    <property type="entry name" value="TRPM"/>
</dbReference>
<dbReference type="InterPro" id="IPR041491">
    <property type="entry name" value="TRPM_SLOG"/>
</dbReference>
<dbReference type="PANTHER" id="PTHR13800:SF5">
    <property type="entry name" value="TRANSIENT RECEPTOR POTENTIAL CATION CHANNEL SUBFAMILY M MEMBER 5"/>
    <property type="match status" value="1"/>
</dbReference>
<dbReference type="PANTHER" id="PTHR13800">
    <property type="entry name" value="TRANSIENT RECEPTOR POTENTIAL CATION CHANNEL, SUBFAMILY M, MEMBER 6"/>
    <property type="match status" value="1"/>
</dbReference>
<dbReference type="Pfam" id="PF00520">
    <property type="entry name" value="Ion_trans"/>
    <property type="match status" value="1"/>
</dbReference>
<dbReference type="Pfam" id="PF18139">
    <property type="entry name" value="LSDAT_euk"/>
    <property type="match status" value="1"/>
</dbReference>
<dbReference type="Pfam" id="PF25508">
    <property type="entry name" value="TRPM2"/>
    <property type="match status" value="1"/>
</dbReference>
<sequence>MQDVQGPRPGSPGDAEDRRELGLHRGEVNFGGSGKKRGKFVRVPSGVAPSVLFDLLLAEWHLPAPNLVVSLVGEEQPFAMKSWLRDVLRKGLVKAAQSTGAWILTSALRVGLARHVGQAVRDHSLASTSTKVRVVAVGMASLGRVLHRRILEEAQEDFPVHYPEDDGGSQGPLCSLDSNLSHFILVEPGPPGKGDGLTELRLRLEKHISEQRAGYGGTGSIEIPVLCLLVNGDPNTLERISRAVEQAAPWLILVGSGGIADVLAALVNQPHLLVPKVAEKQFKEKFPSKHFSWEDIVRWTKLLQNITSHQHLLTVYDFEQEGSEELDTVILKALVKACKSHSQEPQDYLDELKLAVAWDRVDIAKSEIFNGDVEWKSCDLEEVMVDALVSNKPEFVRLFVDNGADVADFLTYGRLQELYRSVSRKSLLFDLLQRKQEEARLTLAGLGTQQAREPPAGPPAFSLHEVSRVLKDFLQDACRGFYQDGRPGDRRRAEKGPAKRPTGQKWLLDLNQKSENPWRDLFLWAVLQNRHEMATYFWAMGQEGVAAALAACKILKEMSHLETEAEAARATREAKYERLALDLFSECYSNSEARAFALLVRRNRCWSKTTCLHLATEADAKAFFAHDGVQAFLTRIWWGDMAAGTPILRLLGAFLCPALVYTNLITFSEEAPLRTGLEDLQDLDSLDTEKSPLYGLQSRVEELVEAPRAQGDRGPRAVFLLTRWRKFWGAPVTVFLGNVVMYFAFLFLFTYVLLVDFRPPPQGPSGPEVTLYFWVFTLVLEEIRQGFFTDEDTHLVKKFTLYVGDNWNKCDMVAIFLFIVGVTCRMLPSAFEAGRTVLAMDFMVFTLRLIHIFAIHKQLGPKIIVVERMMKDVFFFLFFLSVWLVAYGVTTQALLHPHDGRLEWIFRRVLYRPYLQIFGQIPLDEIDEARVNCSTHPLLLEDSPSCPSLYANWLVILLLVTFLLVTNVLLMNLLIAMFSYTFQVVQGNADMFWKFQRYNLIVEYHERPALAPPFILLSHLSLTLRRVFKKEAEHKREHLERDLPDPLDQKVVTWETVQKENFLSKMEKRRRDSEGEVLRKTAHRVDFIAKYLGGLREQEKRIKCLESQINYCSVLVSSVADVLAQGGGPRSSQHCGEGSQLVAADHRGGLDGWEQPGAGQPPSDT</sequence>
<keyword id="KW-0025">Alternative splicing</keyword>
<keyword id="KW-0106">Calcium</keyword>
<keyword id="KW-1003">Cell membrane</keyword>
<keyword id="KW-0175">Coiled coil</keyword>
<keyword id="KW-0407">Ion channel</keyword>
<keyword id="KW-0406">Ion transport</keyword>
<keyword id="KW-1071">Ligand-gated ion channel</keyword>
<keyword id="KW-0472">Membrane</keyword>
<keyword id="KW-0479">Metal-binding</keyword>
<keyword id="KW-0597">Phosphoprotein</keyword>
<keyword id="KW-0675">Receptor</keyword>
<keyword id="KW-1185">Reference proteome</keyword>
<keyword id="KW-0812">Transmembrane</keyword>
<keyword id="KW-1133">Transmembrane helix</keyword>
<keyword id="KW-0813">Transport</keyword>
<keyword id="KW-0851">Voltage-gated channel</keyword>
<reference evidence="13 14" key="1">
    <citation type="journal article" date="2000" name="Hum. Mol. Genet.">
        <title>Identification and characterization of MTR1, a novel gene with homology to melastatin (MLSN1) and the trp gene family located in the BWS-WT2 critical region on chromosome 11p15.5 and showing allele-specific expression.</title>
        <authorList>
            <person name="Prawitt D."/>
            <person name="Enklaar T."/>
            <person name="Klemm G."/>
            <person name="Gaertner B."/>
            <person name="Spangenberg C."/>
            <person name="Winterpacht A."/>
            <person name="Higgins M."/>
            <person name="Pelletier J."/>
            <person name="Zabel B."/>
        </authorList>
    </citation>
    <scope>NUCLEOTIDE SEQUENCE [MRNA] (ISOFORM 1)</scope>
    <scope>ALTERNATIVE SPLICING (ISOFORM 3)</scope>
    <scope>TISSUE SPECIFICITY</scope>
</reference>
<reference evidence="13" key="2">
    <citation type="journal article" date="2006" name="Nature">
        <title>Human chromosome 11 DNA sequence and analysis including novel gene identification.</title>
        <authorList>
            <person name="Taylor T.D."/>
            <person name="Noguchi H."/>
            <person name="Totoki Y."/>
            <person name="Toyoda A."/>
            <person name="Kuroki Y."/>
            <person name="Dewar K."/>
            <person name="Lloyd C."/>
            <person name="Itoh T."/>
            <person name="Takeda T."/>
            <person name="Kim D.-W."/>
            <person name="She X."/>
            <person name="Barlow K.F."/>
            <person name="Bloom T."/>
            <person name="Bruford E."/>
            <person name="Chang J.L."/>
            <person name="Cuomo C.A."/>
            <person name="Eichler E."/>
            <person name="FitzGerald M.G."/>
            <person name="Jaffe D.B."/>
            <person name="LaButti K."/>
            <person name="Nicol R."/>
            <person name="Park H.-S."/>
            <person name="Seaman C."/>
            <person name="Sougnez C."/>
            <person name="Yang X."/>
            <person name="Zimmer A.R."/>
            <person name="Zody M.C."/>
            <person name="Birren B.W."/>
            <person name="Nusbaum C."/>
            <person name="Fujiyama A."/>
            <person name="Hattori M."/>
            <person name="Rogers J."/>
            <person name="Lander E.S."/>
            <person name="Sakaki Y."/>
        </authorList>
    </citation>
    <scope>NUCLEOTIDE SEQUENCE [LARGE SCALE GENOMIC DNA]</scope>
</reference>
<reference evidence="13 15" key="3">
    <citation type="journal article" date="2004" name="Genome Res.">
        <title>The status, quality, and expansion of the NIH full-length cDNA project: the Mammalian Gene Collection (MGC).</title>
        <authorList>
            <consortium name="The MGC Project Team"/>
        </authorList>
    </citation>
    <scope>NUCLEOTIDE SEQUENCE [LARGE SCALE MRNA] (ISOFORM 1)</scope>
    <scope>VARIANT ALA-254</scope>
</reference>
<reference evidence="13 16" key="4">
    <citation type="submission" date="2000-01" db="EMBL/GenBank/DDBJ databases">
        <title>Comparative sequence analysis and characterization of the imprinting cluster on the human chromosome 11p15.5 and distal mouse chromosome 7.</title>
        <authorList>
            <person name="Paulsen M."/>
            <person name="El-Maarri O."/>
            <person name="Engemann S."/>
            <person name="Franck O."/>
            <person name="Stroedicke M."/>
            <person name="Davies K.R."/>
            <person name="Bowden L.M."/>
            <person name="Reinhardt R."/>
            <person name="Reik W."/>
            <person name="Harteneck C."/>
            <person name="Walter J."/>
        </authorList>
    </citation>
    <scope>NUCLEOTIDE SEQUENCE [MRNA] OF 9-1165 (ISOFORM 2)</scope>
</reference>
<reference evidence="13" key="5">
    <citation type="journal article" date="2003" name="Proc. Natl. Acad. Sci. U.S.A.">
        <title>TRPM5 is a transient Ca2+-activated cation channel responding to rapid changes in [Ca2+]i.</title>
        <authorList>
            <person name="Prawitt D."/>
            <person name="Monteilh-Zoller M.K."/>
            <person name="Brixel L."/>
            <person name="Spangenberg C."/>
            <person name="Zabel B."/>
            <person name="Fleig A."/>
            <person name="Penner R."/>
        </authorList>
    </citation>
    <scope>FUNCTION</scope>
    <scope>TRANSPORTER ACTIVITY</scope>
    <scope>ACTIVITY REGULATION</scope>
</reference>
<reference key="6">
    <citation type="journal article" date="2021" name="Nat. Struct. Mol. Biol.">
        <title>Structures of the TRPM5 channel elucidate mechanisms of activation and inhibition.</title>
        <authorList>
            <person name="Ruan Z."/>
            <person name="Haley E."/>
            <person name="Orozco I.J."/>
            <person name="Sabat M."/>
            <person name="Myers R."/>
            <person name="Roth R."/>
            <person name="Du J."/>
            <person name="Lu W."/>
        </authorList>
    </citation>
    <scope>FUNCTION</scope>
    <scope>MUTAGENESIS OF GLU-351</scope>
</reference>
<gene>
    <name evidence="17" type="primary">TRPM5</name>
    <name evidence="16" type="synonym">LTRPC5</name>
    <name evidence="11" type="synonym">MTR1</name>
</gene>
<organism>
    <name type="scientific">Homo sapiens</name>
    <name type="common">Human</name>
    <dbReference type="NCBI Taxonomy" id="9606"/>
    <lineage>
        <taxon>Eukaryota</taxon>
        <taxon>Metazoa</taxon>
        <taxon>Chordata</taxon>
        <taxon>Craniata</taxon>
        <taxon>Vertebrata</taxon>
        <taxon>Euteleostomi</taxon>
        <taxon>Mammalia</taxon>
        <taxon>Eutheria</taxon>
        <taxon>Euarchontoglires</taxon>
        <taxon>Primates</taxon>
        <taxon>Haplorrhini</taxon>
        <taxon>Catarrhini</taxon>
        <taxon>Hominidae</taxon>
        <taxon>Homo</taxon>
    </lineage>
</organism>
<name>TRPM5_HUMAN</name>
<protein>
    <recommendedName>
        <fullName>Transient receptor potential cation channel subfamily M member 5</fullName>
    </recommendedName>
    <alternativeName>
        <fullName>Long transient receptor potential channel 5</fullName>
        <shortName>LTrpC-5</shortName>
        <shortName>LTrpC5</shortName>
    </alternativeName>
    <alternativeName>
        <fullName>MLSN1- and TRP-related gene 1 protein</fullName>
    </alternativeName>
</protein>
<evidence type="ECO:0000250" key="1">
    <source>
        <dbReference type="UniProtKB" id="Q9JJH7"/>
    </source>
</evidence>
<evidence type="ECO:0000250" key="2">
    <source>
        <dbReference type="UniProtKB" id="S5UH55"/>
    </source>
</evidence>
<evidence type="ECO:0000255" key="3"/>
<evidence type="ECO:0000256" key="4">
    <source>
        <dbReference type="SAM" id="MobiDB-lite"/>
    </source>
</evidence>
<evidence type="ECO:0000269" key="5">
    <source>
    </source>
</evidence>
<evidence type="ECO:0000269" key="6">
    <source>
    </source>
</evidence>
<evidence type="ECO:0000269" key="7">
    <source>
    </source>
</evidence>
<evidence type="ECO:0000269" key="8">
    <source>
    </source>
</evidence>
<evidence type="ECO:0000269" key="9">
    <source>
    </source>
</evidence>
<evidence type="ECO:0000269" key="10">
    <source ref="4"/>
</evidence>
<evidence type="ECO:0000303" key="11">
    <source>
    </source>
</evidence>
<evidence type="ECO:0000303" key="12">
    <source ref="4"/>
</evidence>
<evidence type="ECO:0000305" key="13"/>
<evidence type="ECO:0000312" key="14">
    <source>
        <dbReference type="EMBL" id="AAF26288.1"/>
    </source>
</evidence>
<evidence type="ECO:0000312" key="15">
    <source>
        <dbReference type="EMBL" id="AAH93787.1"/>
    </source>
</evidence>
<evidence type="ECO:0000312" key="16">
    <source>
        <dbReference type="EMBL" id="CAB66342.1"/>
    </source>
</evidence>
<evidence type="ECO:0000312" key="17">
    <source>
        <dbReference type="HGNC" id="HGNC:14323"/>
    </source>
</evidence>
<proteinExistence type="evidence at protein level"/>
<accession>Q9NZQ8</accession>
<accession>A6NHS0</accession>
<accession>Q52LU2</accession>
<accession>Q9NY34</accession>